<protein>
    <recommendedName>
        <fullName evidence="1">Phenylalanine--tRNA ligase alpha subunit</fullName>
        <ecNumber evidence="1">6.1.1.20</ecNumber>
    </recommendedName>
    <alternativeName>
        <fullName evidence="1">Phenylalanyl-tRNA synthetase alpha subunit</fullName>
        <shortName evidence="1">PheRS</shortName>
    </alternativeName>
</protein>
<name>SYFA_VIBVY</name>
<proteinExistence type="inferred from homology"/>
<sequence>MQHLQEIIANANAAIDAAQSLVALDEVRVQYLGKKGELTAQLQSLGKLPPEERREAGQEINKAKEVVQHALAARKDALQRAELEAKLASETIDVTLPGRRIENGGLHPVTRTVERIEQFFGELGFNVESGPEIEDAFHNFDALNIAADHPARTDHDTFFFNPDLMLRTHTSGVQIRTMENGKPPFRFIAPGRVYRNDYDQTHTPMFHQVEGMLVDENVNFAQLKGILHDFLCNFFEEEVEVRFRPSYFPFTEPSAEVDVKGKNGKWLEVLGCGMVHPNVLRSVGIDPEKYSGFAFGMGVERLTMLRYGVNDLRAFFENDLRFLKQFK</sequence>
<gene>
    <name evidence="1" type="primary">pheS</name>
    <name type="ordered locus">VV1971</name>
</gene>
<accession>Q7MK39</accession>
<dbReference type="EC" id="6.1.1.20" evidence="1"/>
<dbReference type="EMBL" id="BA000037">
    <property type="protein sequence ID" value="BAC94735.1"/>
    <property type="molecule type" value="Genomic_DNA"/>
</dbReference>
<dbReference type="RefSeq" id="WP_011080237.1">
    <property type="nucleotide sequence ID" value="NC_005139.1"/>
</dbReference>
<dbReference type="SMR" id="Q7MK39"/>
<dbReference type="STRING" id="672.VV93_v1c17330"/>
<dbReference type="KEGG" id="vvy:VV1971"/>
<dbReference type="PATRIC" id="fig|196600.6.peg.1999"/>
<dbReference type="eggNOG" id="COG0016">
    <property type="taxonomic scope" value="Bacteria"/>
</dbReference>
<dbReference type="HOGENOM" id="CLU_025086_0_1_6"/>
<dbReference type="Proteomes" id="UP000002675">
    <property type="component" value="Chromosome I"/>
</dbReference>
<dbReference type="GO" id="GO:0005737">
    <property type="term" value="C:cytoplasm"/>
    <property type="evidence" value="ECO:0007669"/>
    <property type="project" value="UniProtKB-SubCell"/>
</dbReference>
<dbReference type="GO" id="GO:0005524">
    <property type="term" value="F:ATP binding"/>
    <property type="evidence" value="ECO:0007669"/>
    <property type="project" value="UniProtKB-UniRule"/>
</dbReference>
<dbReference type="GO" id="GO:0000287">
    <property type="term" value="F:magnesium ion binding"/>
    <property type="evidence" value="ECO:0007669"/>
    <property type="project" value="UniProtKB-UniRule"/>
</dbReference>
<dbReference type="GO" id="GO:0004826">
    <property type="term" value="F:phenylalanine-tRNA ligase activity"/>
    <property type="evidence" value="ECO:0007669"/>
    <property type="project" value="UniProtKB-UniRule"/>
</dbReference>
<dbReference type="GO" id="GO:0000049">
    <property type="term" value="F:tRNA binding"/>
    <property type="evidence" value="ECO:0007669"/>
    <property type="project" value="InterPro"/>
</dbReference>
<dbReference type="GO" id="GO:0006432">
    <property type="term" value="P:phenylalanyl-tRNA aminoacylation"/>
    <property type="evidence" value="ECO:0007669"/>
    <property type="project" value="UniProtKB-UniRule"/>
</dbReference>
<dbReference type="CDD" id="cd00496">
    <property type="entry name" value="PheRS_alpha_core"/>
    <property type="match status" value="1"/>
</dbReference>
<dbReference type="FunFam" id="3.30.930.10:FF:000003">
    <property type="entry name" value="Phenylalanine--tRNA ligase alpha subunit"/>
    <property type="match status" value="1"/>
</dbReference>
<dbReference type="Gene3D" id="3.30.930.10">
    <property type="entry name" value="Bira Bifunctional Protein, Domain 2"/>
    <property type="match status" value="1"/>
</dbReference>
<dbReference type="HAMAP" id="MF_00281">
    <property type="entry name" value="Phe_tRNA_synth_alpha1"/>
    <property type="match status" value="1"/>
</dbReference>
<dbReference type="InterPro" id="IPR006195">
    <property type="entry name" value="aa-tRNA-synth_II"/>
</dbReference>
<dbReference type="InterPro" id="IPR045864">
    <property type="entry name" value="aa-tRNA-synth_II/BPL/LPL"/>
</dbReference>
<dbReference type="InterPro" id="IPR004529">
    <property type="entry name" value="Phe-tRNA-synth_IIc_asu"/>
</dbReference>
<dbReference type="InterPro" id="IPR004188">
    <property type="entry name" value="Phe-tRNA_ligase_II_N"/>
</dbReference>
<dbReference type="InterPro" id="IPR022911">
    <property type="entry name" value="Phe_tRNA_ligase_alpha1_bac"/>
</dbReference>
<dbReference type="InterPro" id="IPR002319">
    <property type="entry name" value="Phenylalanyl-tRNA_Synthase"/>
</dbReference>
<dbReference type="InterPro" id="IPR010978">
    <property type="entry name" value="tRNA-bd_arm"/>
</dbReference>
<dbReference type="NCBIfam" id="TIGR00468">
    <property type="entry name" value="pheS"/>
    <property type="match status" value="1"/>
</dbReference>
<dbReference type="PANTHER" id="PTHR11538:SF41">
    <property type="entry name" value="PHENYLALANINE--TRNA LIGASE, MITOCHONDRIAL"/>
    <property type="match status" value="1"/>
</dbReference>
<dbReference type="PANTHER" id="PTHR11538">
    <property type="entry name" value="PHENYLALANYL-TRNA SYNTHETASE"/>
    <property type="match status" value="1"/>
</dbReference>
<dbReference type="Pfam" id="PF02912">
    <property type="entry name" value="Phe_tRNA-synt_N"/>
    <property type="match status" value="1"/>
</dbReference>
<dbReference type="Pfam" id="PF01409">
    <property type="entry name" value="tRNA-synt_2d"/>
    <property type="match status" value="1"/>
</dbReference>
<dbReference type="SUPFAM" id="SSF55681">
    <property type="entry name" value="Class II aaRS and biotin synthetases"/>
    <property type="match status" value="1"/>
</dbReference>
<dbReference type="SUPFAM" id="SSF46589">
    <property type="entry name" value="tRNA-binding arm"/>
    <property type="match status" value="1"/>
</dbReference>
<dbReference type="PROSITE" id="PS50862">
    <property type="entry name" value="AA_TRNA_LIGASE_II"/>
    <property type="match status" value="1"/>
</dbReference>
<organism>
    <name type="scientific">Vibrio vulnificus (strain YJ016)</name>
    <dbReference type="NCBI Taxonomy" id="196600"/>
    <lineage>
        <taxon>Bacteria</taxon>
        <taxon>Pseudomonadati</taxon>
        <taxon>Pseudomonadota</taxon>
        <taxon>Gammaproteobacteria</taxon>
        <taxon>Vibrionales</taxon>
        <taxon>Vibrionaceae</taxon>
        <taxon>Vibrio</taxon>
    </lineage>
</organism>
<keyword id="KW-0030">Aminoacyl-tRNA synthetase</keyword>
<keyword id="KW-0067">ATP-binding</keyword>
<keyword id="KW-0963">Cytoplasm</keyword>
<keyword id="KW-0436">Ligase</keyword>
<keyword id="KW-0460">Magnesium</keyword>
<keyword id="KW-0479">Metal-binding</keyword>
<keyword id="KW-0547">Nucleotide-binding</keyword>
<keyword id="KW-0648">Protein biosynthesis</keyword>
<evidence type="ECO:0000255" key="1">
    <source>
        <dbReference type="HAMAP-Rule" id="MF_00281"/>
    </source>
</evidence>
<reference key="1">
    <citation type="journal article" date="2003" name="Genome Res.">
        <title>Comparative genome analysis of Vibrio vulnificus, a marine pathogen.</title>
        <authorList>
            <person name="Chen C.-Y."/>
            <person name="Wu K.-M."/>
            <person name="Chang Y.-C."/>
            <person name="Chang C.-H."/>
            <person name="Tsai H.-C."/>
            <person name="Liao T.-L."/>
            <person name="Liu Y.-M."/>
            <person name="Chen H.-J."/>
            <person name="Shen A.B.-T."/>
            <person name="Li J.-C."/>
            <person name="Su T.-L."/>
            <person name="Shao C.-P."/>
            <person name="Lee C.-T."/>
            <person name="Hor L.-I."/>
            <person name="Tsai S.-F."/>
        </authorList>
    </citation>
    <scope>NUCLEOTIDE SEQUENCE [LARGE SCALE GENOMIC DNA]</scope>
    <source>
        <strain>YJ016</strain>
    </source>
</reference>
<comment type="catalytic activity">
    <reaction evidence="1">
        <text>tRNA(Phe) + L-phenylalanine + ATP = L-phenylalanyl-tRNA(Phe) + AMP + diphosphate + H(+)</text>
        <dbReference type="Rhea" id="RHEA:19413"/>
        <dbReference type="Rhea" id="RHEA-COMP:9668"/>
        <dbReference type="Rhea" id="RHEA-COMP:9699"/>
        <dbReference type="ChEBI" id="CHEBI:15378"/>
        <dbReference type="ChEBI" id="CHEBI:30616"/>
        <dbReference type="ChEBI" id="CHEBI:33019"/>
        <dbReference type="ChEBI" id="CHEBI:58095"/>
        <dbReference type="ChEBI" id="CHEBI:78442"/>
        <dbReference type="ChEBI" id="CHEBI:78531"/>
        <dbReference type="ChEBI" id="CHEBI:456215"/>
        <dbReference type="EC" id="6.1.1.20"/>
    </reaction>
</comment>
<comment type="cofactor">
    <cofactor evidence="1">
        <name>Mg(2+)</name>
        <dbReference type="ChEBI" id="CHEBI:18420"/>
    </cofactor>
    <text evidence="1">Binds 2 magnesium ions per tetramer.</text>
</comment>
<comment type="subunit">
    <text evidence="1">Tetramer of two alpha and two beta subunits.</text>
</comment>
<comment type="subcellular location">
    <subcellularLocation>
        <location evidence="1">Cytoplasm</location>
    </subcellularLocation>
</comment>
<comment type="similarity">
    <text evidence="1">Belongs to the class-II aminoacyl-tRNA synthetase family. Phe-tRNA synthetase alpha subunit type 1 subfamily.</text>
</comment>
<feature type="chain" id="PRO_0000126794" description="Phenylalanine--tRNA ligase alpha subunit">
    <location>
        <begin position="1"/>
        <end position="327"/>
    </location>
</feature>
<feature type="binding site" evidence="1">
    <location>
        <position position="252"/>
    </location>
    <ligand>
        <name>Mg(2+)</name>
        <dbReference type="ChEBI" id="CHEBI:18420"/>
        <note>shared with beta subunit</note>
    </ligand>
</feature>